<protein>
    <recommendedName>
        <fullName evidence="1">Leucine--tRNA ligase</fullName>
        <ecNumber evidence="1">6.1.1.4</ecNumber>
    </recommendedName>
    <alternativeName>
        <fullName evidence="1">Leucyl-tRNA synthetase</fullName>
        <shortName evidence="1">LeuRS</shortName>
    </alternativeName>
</protein>
<reference key="1">
    <citation type="submission" date="2008-02" db="EMBL/GenBank/DDBJ databases">
        <title>Complete sequence of Shewanella woodyi ATCC 51908.</title>
        <authorList>
            <consortium name="US DOE Joint Genome Institute"/>
            <person name="Copeland A."/>
            <person name="Lucas S."/>
            <person name="Lapidus A."/>
            <person name="Glavina del Rio T."/>
            <person name="Dalin E."/>
            <person name="Tice H."/>
            <person name="Bruce D."/>
            <person name="Goodwin L."/>
            <person name="Pitluck S."/>
            <person name="Sims D."/>
            <person name="Brettin T."/>
            <person name="Detter J.C."/>
            <person name="Han C."/>
            <person name="Kuske C.R."/>
            <person name="Schmutz J."/>
            <person name="Larimer F."/>
            <person name="Land M."/>
            <person name="Hauser L."/>
            <person name="Kyrpides N."/>
            <person name="Lykidis A."/>
            <person name="Zhao J.-S."/>
            <person name="Richardson P."/>
        </authorList>
    </citation>
    <scope>NUCLEOTIDE SEQUENCE [LARGE SCALE GENOMIC DNA]</scope>
    <source>
        <strain>ATCC 51908 / MS32</strain>
    </source>
</reference>
<organism>
    <name type="scientific">Shewanella woodyi (strain ATCC 51908 / MS32)</name>
    <dbReference type="NCBI Taxonomy" id="392500"/>
    <lineage>
        <taxon>Bacteria</taxon>
        <taxon>Pseudomonadati</taxon>
        <taxon>Pseudomonadota</taxon>
        <taxon>Gammaproteobacteria</taxon>
        <taxon>Alteromonadales</taxon>
        <taxon>Shewanellaceae</taxon>
        <taxon>Shewanella</taxon>
    </lineage>
</organism>
<evidence type="ECO:0000255" key="1">
    <source>
        <dbReference type="HAMAP-Rule" id="MF_00049"/>
    </source>
</evidence>
<proteinExistence type="inferred from homology"/>
<feature type="chain" id="PRO_1000091363" description="Leucine--tRNA ligase">
    <location>
        <begin position="1"/>
        <end position="859"/>
    </location>
</feature>
<feature type="short sequence motif" description="'HIGH' region">
    <location>
        <begin position="42"/>
        <end position="52"/>
    </location>
</feature>
<feature type="short sequence motif" description="'KMSKS' region">
    <location>
        <begin position="618"/>
        <end position="622"/>
    </location>
</feature>
<feature type="binding site" evidence="1">
    <location>
        <position position="621"/>
    </location>
    <ligand>
        <name>ATP</name>
        <dbReference type="ChEBI" id="CHEBI:30616"/>
    </ligand>
</feature>
<comment type="catalytic activity">
    <reaction evidence="1">
        <text>tRNA(Leu) + L-leucine + ATP = L-leucyl-tRNA(Leu) + AMP + diphosphate</text>
        <dbReference type="Rhea" id="RHEA:11688"/>
        <dbReference type="Rhea" id="RHEA-COMP:9613"/>
        <dbReference type="Rhea" id="RHEA-COMP:9622"/>
        <dbReference type="ChEBI" id="CHEBI:30616"/>
        <dbReference type="ChEBI" id="CHEBI:33019"/>
        <dbReference type="ChEBI" id="CHEBI:57427"/>
        <dbReference type="ChEBI" id="CHEBI:78442"/>
        <dbReference type="ChEBI" id="CHEBI:78494"/>
        <dbReference type="ChEBI" id="CHEBI:456215"/>
        <dbReference type="EC" id="6.1.1.4"/>
    </reaction>
</comment>
<comment type="subcellular location">
    <subcellularLocation>
        <location evidence="1">Cytoplasm</location>
    </subcellularLocation>
</comment>
<comment type="similarity">
    <text evidence="1">Belongs to the class-I aminoacyl-tRNA synthetase family.</text>
</comment>
<sequence>MQEQYQPSEIEAKVQQHWQDTKTFEVTEDENKEKFYCLSMFPYPSGRLHMGHVRNYTIGDVVARYQRLQGKNVLQPIGWDSFGLPAENAAIKNSSAPAPWTYENIDYMKNQLKMLGFGYDWSREIATCTPEYYRWEQWFFTKLYEKGLVYKKTASVNWCPNDETVLANEQVQDGCCWRCDTEVVQKEIPQWFIKITDYADELLSDIDQLDEWPEQVKTMQRNWIGRSEGIEMTFQVADSDESFDIYTTRPDTVMGVTYVAIAAGHPLAEKAAANSPELAAFIEECKNADTTEAAMAAMEKKGVATGLYAIHPLTGKQVPIWAANFVLMNYGTGAVMSVPAHDQRDYEFAIKYGLAIEGVIKPEDAELDISEEAYTEKGVLFNSAEFDGLDFQAAFDAIDAKLTAEGKGKRQVNFRLRDWGVSRQRYWGAPIPMVTLADGTVVPTPEDQLPVILPEDVVMDGIQSPIKADKEWAKTQINGEDALRETDTFDTFMESSWYYARYCSPHADEMLDPAKANYWLPVDQYIGGIEHACMHLLYFRFFHKLLRDIGLVNSDEPAKRLLTQGMVLADAYYYTNEKGARVWVSPADVTVQETDDKGRTVKAVDSHGNELVYTGMSKMSKSKNNGIDPQEMVDKYGADTVRLFMMFAAPPELTLEWQESSVEGAHRFIKRLWKVAHDHVAKGTTVSLDVKSLDAKQKELRRELHKTIAKVGDDIERRQMFNTAIASVMELMNRLQKAPTETEQDRALMQEALSAVVRLLYPIIPHTSFSLWKELGNEENIEDVRWPEADESALVEDSKLIIVQVNGKLRAKITVPADATKEAVEAQGFAEEGVIKHTEGKTVRKVIYVPGKLLNIVAN</sequence>
<accession>B1KDW0</accession>
<keyword id="KW-0030">Aminoacyl-tRNA synthetase</keyword>
<keyword id="KW-0067">ATP-binding</keyword>
<keyword id="KW-0963">Cytoplasm</keyword>
<keyword id="KW-0436">Ligase</keyword>
<keyword id="KW-0547">Nucleotide-binding</keyword>
<keyword id="KW-0648">Protein biosynthesis</keyword>
<keyword id="KW-1185">Reference proteome</keyword>
<name>SYL_SHEWM</name>
<gene>
    <name evidence="1" type="primary">leuS</name>
    <name type="ordered locus">Swoo_3702</name>
</gene>
<dbReference type="EC" id="6.1.1.4" evidence="1"/>
<dbReference type="EMBL" id="CP000961">
    <property type="protein sequence ID" value="ACA87962.1"/>
    <property type="molecule type" value="Genomic_DNA"/>
</dbReference>
<dbReference type="RefSeq" id="WP_012326294.1">
    <property type="nucleotide sequence ID" value="NC_010506.1"/>
</dbReference>
<dbReference type="SMR" id="B1KDW0"/>
<dbReference type="STRING" id="392500.Swoo_3702"/>
<dbReference type="KEGG" id="swd:Swoo_3702"/>
<dbReference type="eggNOG" id="COG0495">
    <property type="taxonomic scope" value="Bacteria"/>
</dbReference>
<dbReference type="HOGENOM" id="CLU_004427_0_0_6"/>
<dbReference type="Proteomes" id="UP000002168">
    <property type="component" value="Chromosome"/>
</dbReference>
<dbReference type="GO" id="GO:0005829">
    <property type="term" value="C:cytosol"/>
    <property type="evidence" value="ECO:0007669"/>
    <property type="project" value="TreeGrafter"/>
</dbReference>
<dbReference type="GO" id="GO:0002161">
    <property type="term" value="F:aminoacyl-tRNA deacylase activity"/>
    <property type="evidence" value="ECO:0007669"/>
    <property type="project" value="InterPro"/>
</dbReference>
<dbReference type="GO" id="GO:0005524">
    <property type="term" value="F:ATP binding"/>
    <property type="evidence" value="ECO:0007669"/>
    <property type="project" value="UniProtKB-UniRule"/>
</dbReference>
<dbReference type="GO" id="GO:0004823">
    <property type="term" value="F:leucine-tRNA ligase activity"/>
    <property type="evidence" value="ECO:0007669"/>
    <property type="project" value="UniProtKB-UniRule"/>
</dbReference>
<dbReference type="GO" id="GO:0006429">
    <property type="term" value="P:leucyl-tRNA aminoacylation"/>
    <property type="evidence" value="ECO:0007669"/>
    <property type="project" value="UniProtKB-UniRule"/>
</dbReference>
<dbReference type="CDD" id="cd07958">
    <property type="entry name" value="Anticodon_Ia_Leu_BEm"/>
    <property type="match status" value="1"/>
</dbReference>
<dbReference type="CDD" id="cd00812">
    <property type="entry name" value="LeuRS_core"/>
    <property type="match status" value="1"/>
</dbReference>
<dbReference type="FunFam" id="1.10.730.10:FF:000002">
    <property type="entry name" value="Leucine--tRNA ligase"/>
    <property type="match status" value="1"/>
</dbReference>
<dbReference type="FunFam" id="1.10.730.10:FF:000003">
    <property type="entry name" value="Leucine--tRNA ligase"/>
    <property type="match status" value="1"/>
</dbReference>
<dbReference type="FunFam" id="2.20.28.290:FF:000001">
    <property type="entry name" value="Leucine--tRNA ligase"/>
    <property type="match status" value="1"/>
</dbReference>
<dbReference type="FunFam" id="3.10.20.590:FF:000001">
    <property type="entry name" value="Leucine--tRNA ligase"/>
    <property type="match status" value="1"/>
</dbReference>
<dbReference type="FunFam" id="3.40.50.620:FF:000003">
    <property type="entry name" value="Leucine--tRNA ligase"/>
    <property type="match status" value="1"/>
</dbReference>
<dbReference type="FunFam" id="3.40.50.620:FF:000124">
    <property type="entry name" value="Leucine--tRNA ligase"/>
    <property type="match status" value="1"/>
</dbReference>
<dbReference type="Gene3D" id="2.20.28.290">
    <property type="match status" value="1"/>
</dbReference>
<dbReference type="Gene3D" id="3.10.20.590">
    <property type="match status" value="1"/>
</dbReference>
<dbReference type="Gene3D" id="3.40.50.620">
    <property type="entry name" value="HUPs"/>
    <property type="match status" value="2"/>
</dbReference>
<dbReference type="Gene3D" id="1.10.730.10">
    <property type="entry name" value="Isoleucyl-tRNA Synthetase, Domain 1"/>
    <property type="match status" value="2"/>
</dbReference>
<dbReference type="HAMAP" id="MF_00049_B">
    <property type="entry name" value="Leu_tRNA_synth_B"/>
    <property type="match status" value="1"/>
</dbReference>
<dbReference type="InterPro" id="IPR001412">
    <property type="entry name" value="aa-tRNA-synth_I_CS"/>
</dbReference>
<dbReference type="InterPro" id="IPR002300">
    <property type="entry name" value="aa-tRNA-synth_Ia"/>
</dbReference>
<dbReference type="InterPro" id="IPR002302">
    <property type="entry name" value="Leu-tRNA-ligase"/>
</dbReference>
<dbReference type="InterPro" id="IPR025709">
    <property type="entry name" value="Leu_tRNA-synth_edit"/>
</dbReference>
<dbReference type="InterPro" id="IPR013155">
    <property type="entry name" value="M/V/L/I-tRNA-synth_anticd-bd"/>
</dbReference>
<dbReference type="InterPro" id="IPR015413">
    <property type="entry name" value="Methionyl/Leucyl_tRNA_Synth"/>
</dbReference>
<dbReference type="InterPro" id="IPR014729">
    <property type="entry name" value="Rossmann-like_a/b/a_fold"/>
</dbReference>
<dbReference type="InterPro" id="IPR009080">
    <property type="entry name" value="tRNAsynth_Ia_anticodon-bd"/>
</dbReference>
<dbReference type="InterPro" id="IPR009008">
    <property type="entry name" value="Val/Leu/Ile-tRNA-synth_edit"/>
</dbReference>
<dbReference type="NCBIfam" id="TIGR00396">
    <property type="entry name" value="leuS_bact"/>
    <property type="match status" value="1"/>
</dbReference>
<dbReference type="PANTHER" id="PTHR43740:SF2">
    <property type="entry name" value="LEUCINE--TRNA LIGASE, MITOCHONDRIAL"/>
    <property type="match status" value="1"/>
</dbReference>
<dbReference type="PANTHER" id="PTHR43740">
    <property type="entry name" value="LEUCYL-TRNA SYNTHETASE"/>
    <property type="match status" value="1"/>
</dbReference>
<dbReference type="Pfam" id="PF08264">
    <property type="entry name" value="Anticodon_1"/>
    <property type="match status" value="1"/>
</dbReference>
<dbReference type="Pfam" id="PF00133">
    <property type="entry name" value="tRNA-synt_1"/>
    <property type="match status" value="2"/>
</dbReference>
<dbReference type="Pfam" id="PF13603">
    <property type="entry name" value="tRNA-synt_1_2"/>
    <property type="match status" value="1"/>
</dbReference>
<dbReference type="Pfam" id="PF09334">
    <property type="entry name" value="tRNA-synt_1g"/>
    <property type="match status" value="1"/>
</dbReference>
<dbReference type="PRINTS" id="PR00985">
    <property type="entry name" value="TRNASYNTHLEU"/>
</dbReference>
<dbReference type="SUPFAM" id="SSF47323">
    <property type="entry name" value="Anticodon-binding domain of a subclass of class I aminoacyl-tRNA synthetases"/>
    <property type="match status" value="1"/>
</dbReference>
<dbReference type="SUPFAM" id="SSF52374">
    <property type="entry name" value="Nucleotidylyl transferase"/>
    <property type="match status" value="1"/>
</dbReference>
<dbReference type="SUPFAM" id="SSF50677">
    <property type="entry name" value="ValRS/IleRS/LeuRS editing domain"/>
    <property type="match status" value="1"/>
</dbReference>
<dbReference type="PROSITE" id="PS00178">
    <property type="entry name" value="AA_TRNA_LIGASE_I"/>
    <property type="match status" value="1"/>
</dbReference>